<reference key="1">
    <citation type="journal article" date="2014" name="Mol. Biol. Evol.">
        <title>Clawing through evolution: toxin diversification and convergence in the ancient lineage Chilopoda (centipedes).</title>
        <authorList>
            <person name="Undheim E.A."/>
            <person name="Jones A."/>
            <person name="Clauser K.R."/>
            <person name="Holland J.W."/>
            <person name="Pineda S.S."/>
            <person name="King G.F."/>
            <person name="Fry B.G."/>
        </authorList>
    </citation>
    <scope>NUCLEOTIDE SEQUENCE [MRNA]</scope>
    <scope>NOMENCLATURE</scope>
    <source>
        <tissue>Venom gland</tissue>
    </source>
</reference>
<keyword id="KW-1015">Disulfide bond</keyword>
<keyword id="KW-0964">Secreted</keyword>
<keyword id="KW-0732">Signal</keyword>
<keyword id="KW-0800">Toxin</keyword>
<sequence length="52" mass="5546">MLAKAMSLLMMFLLVLVIGSVMVSADDAPACPVGTKYDDVLKSCRSLLELQG</sequence>
<evidence type="ECO:0000255" key="1"/>
<evidence type="ECO:0000303" key="2">
    <source>
    </source>
</evidence>
<evidence type="ECO:0000305" key="3"/>
<evidence type="ECO:0000305" key="4">
    <source>
    </source>
</evidence>
<proteinExistence type="inferred from homology"/>
<dbReference type="GO" id="GO:0005576">
    <property type="term" value="C:extracellular region"/>
    <property type="evidence" value="ECO:0007669"/>
    <property type="project" value="UniProtKB-SubCell"/>
</dbReference>
<dbReference type="GO" id="GO:0090729">
    <property type="term" value="F:toxin activity"/>
    <property type="evidence" value="ECO:0007669"/>
    <property type="project" value="UniProtKB-KW"/>
</dbReference>
<comment type="subcellular location">
    <subcellularLocation>
        <location evidence="4">Secreted</location>
    </subcellularLocation>
</comment>
<comment type="tissue specificity">
    <text evidence="4">Expressed by the venom gland.</text>
</comment>
<comment type="PTM">
    <text evidence="3">Contains 1 disulfide bond.</text>
</comment>
<comment type="similarity">
    <text evidence="3">Belongs to the scutigerotoxin-01 family.</text>
</comment>
<comment type="online information" name="National Center for Biotechnology Information (NCBI)">
    <link uri="https://www.ncbi.nlm.nih.gov/nuccore/GASR01000099"/>
</comment>
<organism>
    <name type="scientific">Thereuopoda longicornis</name>
    <name type="common">Long-legged centipede</name>
    <dbReference type="NCBI Taxonomy" id="353555"/>
    <lineage>
        <taxon>Eukaryota</taxon>
        <taxon>Metazoa</taxon>
        <taxon>Ecdysozoa</taxon>
        <taxon>Arthropoda</taxon>
        <taxon>Myriapoda</taxon>
        <taxon>Chilopoda</taxon>
        <taxon>Notostigmophora</taxon>
        <taxon>Scutigeromorpha</taxon>
        <taxon>Scutigeridae</taxon>
        <taxon>Thereuopoda</taxon>
    </lineage>
</organism>
<accession>P0DPV7</accession>
<protein>
    <recommendedName>
        <fullName evidence="2">U-scutigerotoxin(01)-Tl1a</fullName>
        <shortName evidence="2">U-SCUTX(01)-Tl1a</shortName>
    </recommendedName>
</protein>
<feature type="signal peptide" evidence="1">
    <location>
        <begin position="1"/>
        <end position="25"/>
    </location>
</feature>
<feature type="peptide" id="PRO_0000446839" description="U-scutigerotoxin(01)-Tl1a">
    <location>
        <begin position="26"/>
        <end position="52"/>
    </location>
</feature>
<name>UX11A_THELO</name>